<accession>A2BYL1</accession>
<feature type="chain" id="PRO_0000300372" description="DNA-directed RNA polymerase subunit beta">
    <location>
        <begin position="1"/>
        <end position="1097"/>
    </location>
</feature>
<feature type="region of interest" description="Disordered" evidence="2">
    <location>
        <begin position="1070"/>
        <end position="1097"/>
    </location>
</feature>
<feature type="compositionally biased region" description="Polar residues" evidence="2">
    <location>
        <begin position="1077"/>
        <end position="1091"/>
    </location>
</feature>
<sequence>MSSSALQIAKTATYLPDLVEVQRASFKWFLEKGLIEELKSFSPITDYTGKLELHFIGEEYRLKRPRHDVEEAKRRDATFASQMYVTCRLINKETGEIKEQEVFIGELPLMTERGTFIINGAERVIVNQIVRSPGVYFKDEMDKNGRRTYNASVIPNRGAWLKFETDKNNLLYVRVDKTRKINAHVLMRAMGLSDNDVVDKLRHPEFYKQSIDAANDEGINSEDQALLELYKKLRPGEPPSVSGGQQLLHSRFFDPKRYDLGRVGRYKINKKLRLTVPDNVRTLTHEDVLSTIDYLINLELDIGGASLDDIDHLGNRRVRSVGELLQNQVRVGLNRLERIIKERMTVGETDSLTPAQLVNPKPLVAAIKEFFGSSQLSQFMDQTNPLAELTHKRRISALGPGGLTRERAGFAVRDIHPSHYGRLCPIETPEGPNAGLINSLATHARVNEYGFIETPFWEVEKGRVIKEGKPVYLSADLEDECRVAPGDVATDKSGNILANLIPVRYRQDFEKVPPHQVDYVQLSPVQVISVATSLIPFLEHDDANRALMGSNMQRQAVPLLRPERPLVGTGLESQVARDSGMVPITKVNGIVSYVDANEIVVKDVDGNEHVHYLQKYQRSNQDTCLNQRPIVKNGDQVISGQVLADGSACEGGEIALGQNVLIAYMPWEGYNYEDAILVSERMVTDDLYTSVHIEKYEIEARQTKLGPEEITREIPNISEESLNNLDEMGIIRTGAFVESGDILVGKVTPKGESDQPPEEKLLRAIFGEKARDVRDNSLRVPKTEKGRVLDVRIYTREQGDELPPGANMVVRVYVAQRRKIQVGDKMAGRHGNKGIISRILPREDMPYLPDGTPVDIVLNPLGVPSRMNVGQVFELLMGWAASNLNCRVKVVPFDEMYGAEKSHQTVQAFLKEASKQNGKDWVYNPEDPGKLLLKDGRTGEPFDQPVAVGYSHFLKLVHLVDDKIHARSTGPYSLVTQQPLGGKAQQGGQRLGEMEVWALEAYGAAYTLQELLTVKSDDMQGRNEALNAIVKGKPIPRPGTPESFKVLMRELQSLGLDIGVYTDEGKEVDLMQDVNPRRNTPSRPTYESLGTSEYEED</sequence>
<proteinExistence type="inferred from homology"/>
<organism>
    <name type="scientific">Prochlorococcus marinus (strain MIT 9515)</name>
    <dbReference type="NCBI Taxonomy" id="167542"/>
    <lineage>
        <taxon>Bacteria</taxon>
        <taxon>Bacillati</taxon>
        <taxon>Cyanobacteriota</taxon>
        <taxon>Cyanophyceae</taxon>
        <taxon>Synechococcales</taxon>
        <taxon>Prochlorococcaceae</taxon>
        <taxon>Prochlorococcus</taxon>
    </lineage>
</organism>
<name>RPOB_PROM5</name>
<evidence type="ECO:0000255" key="1">
    <source>
        <dbReference type="HAMAP-Rule" id="MF_01321"/>
    </source>
</evidence>
<evidence type="ECO:0000256" key="2">
    <source>
        <dbReference type="SAM" id="MobiDB-lite"/>
    </source>
</evidence>
<reference key="1">
    <citation type="journal article" date="2007" name="PLoS Genet.">
        <title>Patterns and implications of gene gain and loss in the evolution of Prochlorococcus.</title>
        <authorList>
            <person name="Kettler G.C."/>
            <person name="Martiny A.C."/>
            <person name="Huang K."/>
            <person name="Zucker J."/>
            <person name="Coleman M.L."/>
            <person name="Rodrigue S."/>
            <person name="Chen F."/>
            <person name="Lapidus A."/>
            <person name="Ferriera S."/>
            <person name="Johnson J."/>
            <person name="Steglich C."/>
            <person name="Church G.M."/>
            <person name="Richardson P."/>
            <person name="Chisholm S.W."/>
        </authorList>
    </citation>
    <scope>NUCLEOTIDE SEQUENCE [LARGE SCALE GENOMIC DNA]</scope>
    <source>
        <strain>MIT 9515</strain>
    </source>
</reference>
<protein>
    <recommendedName>
        <fullName evidence="1">DNA-directed RNA polymerase subunit beta</fullName>
        <shortName evidence="1">RNAP subunit beta</shortName>
        <ecNumber evidence="1">2.7.7.6</ecNumber>
    </recommendedName>
    <alternativeName>
        <fullName evidence="1">RNA polymerase subunit beta</fullName>
    </alternativeName>
    <alternativeName>
        <fullName evidence="1">Transcriptase subunit beta</fullName>
    </alternativeName>
</protein>
<dbReference type="EC" id="2.7.7.6" evidence="1"/>
<dbReference type="EMBL" id="CP000552">
    <property type="protein sequence ID" value="ABM72872.1"/>
    <property type="molecule type" value="Genomic_DNA"/>
</dbReference>
<dbReference type="RefSeq" id="WP_011820965.1">
    <property type="nucleotide sequence ID" value="NC_008817.1"/>
</dbReference>
<dbReference type="SMR" id="A2BYL1"/>
<dbReference type="STRING" id="167542.P9515_16651"/>
<dbReference type="GeneID" id="60201630"/>
<dbReference type="KEGG" id="pmc:P9515_16651"/>
<dbReference type="eggNOG" id="COG0085">
    <property type="taxonomic scope" value="Bacteria"/>
</dbReference>
<dbReference type="HOGENOM" id="CLU_000524_4_3_3"/>
<dbReference type="OrthoDB" id="9803954at2"/>
<dbReference type="Proteomes" id="UP000001589">
    <property type="component" value="Chromosome"/>
</dbReference>
<dbReference type="GO" id="GO:0000428">
    <property type="term" value="C:DNA-directed RNA polymerase complex"/>
    <property type="evidence" value="ECO:0007669"/>
    <property type="project" value="UniProtKB-KW"/>
</dbReference>
<dbReference type="GO" id="GO:0003677">
    <property type="term" value="F:DNA binding"/>
    <property type="evidence" value="ECO:0007669"/>
    <property type="project" value="UniProtKB-UniRule"/>
</dbReference>
<dbReference type="GO" id="GO:0003899">
    <property type="term" value="F:DNA-directed RNA polymerase activity"/>
    <property type="evidence" value="ECO:0007669"/>
    <property type="project" value="UniProtKB-UniRule"/>
</dbReference>
<dbReference type="GO" id="GO:0032549">
    <property type="term" value="F:ribonucleoside binding"/>
    <property type="evidence" value="ECO:0007669"/>
    <property type="project" value="InterPro"/>
</dbReference>
<dbReference type="GO" id="GO:0006351">
    <property type="term" value="P:DNA-templated transcription"/>
    <property type="evidence" value="ECO:0007669"/>
    <property type="project" value="UniProtKB-UniRule"/>
</dbReference>
<dbReference type="CDD" id="cd00653">
    <property type="entry name" value="RNA_pol_B_RPB2"/>
    <property type="match status" value="1"/>
</dbReference>
<dbReference type="FunFam" id="3.90.1800.10:FF:000001">
    <property type="entry name" value="DNA-directed RNA polymerase subunit beta"/>
    <property type="match status" value="1"/>
</dbReference>
<dbReference type="Gene3D" id="2.40.50.100">
    <property type="match status" value="1"/>
</dbReference>
<dbReference type="Gene3D" id="2.40.50.150">
    <property type="match status" value="1"/>
</dbReference>
<dbReference type="Gene3D" id="3.90.1100.10">
    <property type="match status" value="1"/>
</dbReference>
<dbReference type="Gene3D" id="2.30.150.10">
    <property type="entry name" value="DNA-directed RNA polymerase, beta subunit, external 1 domain"/>
    <property type="match status" value="1"/>
</dbReference>
<dbReference type="Gene3D" id="2.40.270.10">
    <property type="entry name" value="DNA-directed RNA polymerase, subunit 2, domain 6"/>
    <property type="match status" value="1"/>
</dbReference>
<dbReference type="Gene3D" id="3.90.1800.10">
    <property type="entry name" value="RNA polymerase alpha subunit dimerisation domain"/>
    <property type="match status" value="1"/>
</dbReference>
<dbReference type="Gene3D" id="3.90.1110.10">
    <property type="entry name" value="RNA polymerase Rpb2, domain 2"/>
    <property type="match status" value="1"/>
</dbReference>
<dbReference type="HAMAP" id="MF_01321">
    <property type="entry name" value="RNApol_bact_RpoB"/>
    <property type="match status" value="1"/>
</dbReference>
<dbReference type="InterPro" id="IPR042107">
    <property type="entry name" value="DNA-dir_RNA_pol_bsu_ext_1_sf"/>
</dbReference>
<dbReference type="InterPro" id="IPR019462">
    <property type="entry name" value="DNA-dir_RNA_pol_bsu_external_1"/>
</dbReference>
<dbReference type="InterPro" id="IPR015712">
    <property type="entry name" value="DNA-dir_RNA_pol_su2"/>
</dbReference>
<dbReference type="InterPro" id="IPR007120">
    <property type="entry name" value="DNA-dir_RNAP_su2_dom"/>
</dbReference>
<dbReference type="InterPro" id="IPR037033">
    <property type="entry name" value="DNA-dir_RNAP_su2_hyb_sf"/>
</dbReference>
<dbReference type="InterPro" id="IPR010243">
    <property type="entry name" value="RNA_pol_bsu_bac"/>
</dbReference>
<dbReference type="InterPro" id="IPR007121">
    <property type="entry name" value="RNA_pol_bsu_CS"/>
</dbReference>
<dbReference type="InterPro" id="IPR007644">
    <property type="entry name" value="RNA_pol_bsu_protrusion"/>
</dbReference>
<dbReference type="InterPro" id="IPR007642">
    <property type="entry name" value="RNA_pol_Rpb2_2"/>
</dbReference>
<dbReference type="InterPro" id="IPR037034">
    <property type="entry name" value="RNA_pol_Rpb2_2_sf"/>
</dbReference>
<dbReference type="InterPro" id="IPR007645">
    <property type="entry name" value="RNA_pol_Rpb2_3"/>
</dbReference>
<dbReference type="InterPro" id="IPR007641">
    <property type="entry name" value="RNA_pol_Rpb2_7"/>
</dbReference>
<dbReference type="InterPro" id="IPR014724">
    <property type="entry name" value="RNA_pol_RPB2_OB-fold"/>
</dbReference>
<dbReference type="NCBIfam" id="NF001616">
    <property type="entry name" value="PRK00405.1"/>
    <property type="match status" value="1"/>
</dbReference>
<dbReference type="NCBIfam" id="TIGR02013">
    <property type="entry name" value="rpoB"/>
    <property type="match status" value="1"/>
</dbReference>
<dbReference type="PANTHER" id="PTHR20856">
    <property type="entry name" value="DNA-DIRECTED RNA POLYMERASE I SUBUNIT 2"/>
    <property type="match status" value="1"/>
</dbReference>
<dbReference type="Pfam" id="PF04563">
    <property type="entry name" value="RNA_pol_Rpb2_1"/>
    <property type="match status" value="1"/>
</dbReference>
<dbReference type="Pfam" id="PF04561">
    <property type="entry name" value="RNA_pol_Rpb2_2"/>
    <property type="match status" value="1"/>
</dbReference>
<dbReference type="Pfam" id="PF04565">
    <property type="entry name" value="RNA_pol_Rpb2_3"/>
    <property type="match status" value="1"/>
</dbReference>
<dbReference type="Pfam" id="PF10385">
    <property type="entry name" value="RNA_pol_Rpb2_45"/>
    <property type="match status" value="1"/>
</dbReference>
<dbReference type="Pfam" id="PF00562">
    <property type="entry name" value="RNA_pol_Rpb2_6"/>
    <property type="match status" value="1"/>
</dbReference>
<dbReference type="Pfam" id="PF04560">
    <property type="entry name" value="RNA_pol_Rpb2_7"/>
    <property type="match status" value="1"/>
</dbReference>
<dbReference type="SUPFAM" id="SSF64484">
    <property type="entry name" value="beta and beta-prime subunits of DNA dependent RNA-polymerase"/>
    <property type="match status" value="1"/>
</dbReference>
<dbReference type="PROSITE" id="PS01166">
    <property type="entry name" value="RNA_POL_BETA"/>
    <property type="match status" value="1"/>
</dbReference>
<keyword id="KW-0240">DNA-directed RNA polymerase</keyword>
<keyword id="KW-0548">Nucleotidyltransferase</keyword>
<keyword id="KW-0804">Transcription</keyword>
<keyword id="KW-0808">Transferase</keyword>
<comment type="function">
    <text evidence="1">DNA-dependent RNA polymerase catalyzes the transcription of DNA into RNA using the four ribonucleoside triphosphates as substrates.</text>
</comment>
<comment type="catalytic activity">
    <reaction evidence="1">
        <text>RNA(n) + a ribonucleoside 5'-triphosphate = RNA(n+1) + diphosphate</text>
        <dbReference type="Rhea" id="RHEA:21248"/>
        <dbReference type="Rhea" id="RHEA-COMP:14527"/>
        <dbReference type="Rhea" id="RHEA-COMP:17342"/>
        <dbReference type="ChEBI" id="CHEBI:33019"/>
        <dbReference type="ChEBI" id="CHEBI:61557"/>
        <dbReference type="ChEBI" id="CHEBI:140395"/>
        <dbReference type="EC" id="2.7.7.6"/>
    </reaction>
</comment>
<comment type="subunit">
    <text evidence="1">In cyanobacteria the RNAP catalytic core is composed of 2 alpha, 1 beta, 1 beta', 1 gamma and 1 omega subunit. When a sigma factor is associated with the core the holoenzyme is formed, which can initiate transcription.</text>
</comment>
<comment type="similarity">
    <text evidence="1">Belongs to the RNA polymerase beta chain family.</text>
</comment>
<gene>
    <name evidence="1" type="primary">rpoB</name>
    <name type="ordered locus">P9515_16651</name>
</gene>